<dbReference type="EMBL" id="X72014">
    <property type="protein sequence ID" value="CAA50893.1"/>
    <property type="molecule type" value="Genomic_DNA"/>
</dbReference>
<dbReference type="EMBL" id="AP009351">
    <property type="protein sequence ID" value="BAF67341.1"/>
    <property type="molecule type" value="Genomic_DNA"/>
</dbReference>
<dbReference type="PIR" id="S49411">
    <property type="entry name" value="S34269"/>
</dbReference>
<dbReference type="PIR" id="S49413">
    <property type="entry name" value="S34270"/>
</dbReference>
<dbReference type="RefSeq" id="WP_000791587.1">
    <property type="nucleotide sequence ID" value="NZ_JBBIAE010000001.1"/>
</dbReference>
<dbReference type="PDB" id="3D5R">
    <property type="method" value="X-ray"/>
    <property type="resolution" value="2.10 A"/>
    <property type="chains" value="C/D=101-164"/>
</dbReference>
<dbReference type="PDB" id="3D5S">
    <property type="method" value="X-ray"/>
    <property type="resolution" value="2.30 A"/>
    <property type="chains" value="C/D=101-164"/>
</dbReference>
<dbReference type="PDBsum" id="3D5R"/>
<dbReference type="PDBsum" id="3D5S"/>
<dbReference type="SMR" id="A6QG59"/>
<dbReference type="KEGG" id="sae:NWMN_1069"/>
<dbReference type="HOGENOM" id="CLU_136810_0_0_9"/>
<dbReference type="EvolutionaryTrace" id="A6QG59"/>
<dbReference type="PRO" id="PR:A6QG59"/>
<dbReference type="Proteomes" id="UP000006386">
    <property type="component" value="Chromosome"/>
</dbReference>
<dbReference type="GO" id="GO:0005615">
    <property type="term" value="C:extracellular space"/>
    <property type="evidence" value="ECO:0007669"/>
    <property type="project" value="InterPro"/>
</dbReference>
<dbReference type="GO" id="GO:0001848">
    <property type="term" value="F:complement binding"/>
    <property type="evidence" value="ECO:0007669"/>
    <property type="project" value="InterPro"/>
</dbReference>
<dbReference type="Gene3D" id="1.10.10.1270">
    <property type="entry name" value="Sbi, C3 binding domain IV"/>
    <property type="match status" value="1"/>
</dbReference>
<dbReference type="InterPro" id="IPR036233">
    <property type="entry name" value="Efb_C_sf"/>
</dbReference>
<dbReference type="InterPro" id="IPR021033">
    <property type="entry name" value="Extracellular_fibrinogen-bd_C"/>
</dbReference>
<dbReference type="InterPro" id="IPR041909">
    <property type="entry name" value="Sbi_C3_db_domIV"/>
</dbReference>
<dbReference type="Pfam" id="PF12199">
    <property type="entry name" value="efb-c"/>
    <property type="match status" value="1"/>
</dbReference>
<dbReference type="SUPFAM" id="SSF158366">
    <property type="entry name" value="Efb C-domain-like"/>
    <property type="match status" value="1"/>
</dbReference>
<accession>A6QG59</accession>
<accession>P68798</accession>
<accession>Q08691</accession>
<name>FIB_STAAE</name>
<reference key="1">
    <citation type="journal article" date="1994" name="Mol. Microbiol.">
        <title>Cloning and characterization of a gene for a 19 kDa fibrinogen-binding protein from Staphylococcus aureus.</title>
        <authorList>
            <person name="Boden M.K."/>
            <person name="Flock J.-I."/>
        </authorList>
    </citation>
    <scope>NUCLEOTIDE SEQUENCE [GENOMIC DNA]</scope>
    <scope>FUNCTION IN FIBRINOGEN BINDING</scope>
    <scope>SUBCELLULAR LOCATION</scope>
</reference>
<reference key="2">
    <citation type="journal article" date="2008" name="J. Bacteriol.">
        <title>Genome sequence of Staphylococcus aureus strain Newman and comparative analysis of staphylococcal genomes: polymorphism and evolution of two major pathogenicity islands.</title>
        <authorList>
            <person name="Baba T."/>
            <person name="Bae T."/>
            <person name="Schneewind O."/>
            <person name="Takeuchi F."/>
            <person name="Hiramatsu K."/>
        </authorList>
    </citation>
    <scope>NUCLEOTIDE SEQUENCE [LARGE SCALE GENOMIC DNA]</scope>
    <source>
        <strain>Newman</strain>
    </source>
</reference>
<reference key="3">
    <citation type="journal article" date="1992" name="Microb. Pathog.">
        <title>Evidence for three different fibrinogen-binding proteins with unique properties from Staphylococcus aureus strain Newman.</title>
        <authorList>
            <person name="Boden M.K."/>
            <person name="Flock J.-I."/>
        </authorList>
    </citation>
    <scope>PROTEIN SEQUENCE OF THE N-TERMINUS</scope>
    <scope>BINDING TO FIBRINOGEN</scope>
</reference>
<reference key="4">
    <citation type="journal article" date="1996" name="Infect. Immun.">
        <title>Lack of the extracellular 19-kilodalton fibrinogen-binding protein from Staphylococcus aureus decreases virulence in experimental wound infection.</title>
        <authorList>
            <person name="Palma M."/>
            <person name="Nozohoor S."/>
            <person name="Schennings T."/>
            <person name="Heimdahl A."/>
            <person name="Flock J.I."/>
        </authorList>
    </citation>
    <scope>FUNCTION</scope>
    <source>
        <strain>FDA486</strain>
    </source>
</reference>
<reference key="5">
    <citation type="journal article" date="2001" name="J. Biol. Chem.">
        <title>Extracellular fibrinogen-binding protein, Efb, from Staphylococcus aureus blocks platelet aggregation due to its binding to the alpha-chain.</title>
        <authorList>
            <person name="Palma M."/>
            <person name="Shannon O."/>
            <person name="Quezada H.C."/>
            <person name="Berg A."/>
            <person name="Flock J.I."/>
        </authorList>
    </citation>
    <scope>INTERACTION WITH HOST FGA</scope>
    <scope>FUNCTION</scope>
    <source>
        <strain>Newman</strain>
    </source>
</reference>
<reference key="6">
    <citation type="journal article" date="2013" name="PLoS Pathog.">
        <title>Phagocytosis escape by a Staphylococcus aureus protein that connects complement and coagulation proteins at the bacterial surface.</title>
        <authorList>
            <person name="Ko Y.P."/>
            <person name="Kuipers A."/>
            <person name="Freitag C.M."/>
            <person name="Jongerius I."/>
            <person name="Medina E."/>
            <person name="van Rooijen W.J."/>
            <person name="Spaan A.N."/>
            <person name="van Kessel K.P."/>
            <person name="Hoeoek M."/>
            <person name="Rooijakkers S.H."/>
        </authorList>
    </citation>
    <scope>FUNCTION</scope>
    <scope>INTERACTION WITH HOST C3 AND FGA</scope>
</reference>
<reference key="7">
    <citation type="journal article" date="2016" name="Microbiology">
        <title>The Staphylococcus aureus polysaccharide capsule and Efb-dependent fibrinogen shield act in concert to protect against phagocytosis.</title>
        <authorList>
            <person name="Kuipers A."/>
            <person name="Stapels D.A."/>
            <person name="Weerwind L.T."/>
            <person name="Ko Y.P."/>
            <person name="Ruyken M."/>
            <person name="Lee J.C."/>
            <person name="van Kessel K.P."/>
            <person name="Rooijakkers S.H."/>
        </authorList>
    </citation>
    <scope>FUNCTION</scope>
</reference>
<reference key="8">
    <citation type="journal article" date="2008" name="Protein Sci.">
        <title>Electrostatic contributions drive the interaction between Staphylococcus aureus protein Efb-C and its complement target C3d.</title>
        <authorList>
            <person name="Haspel N."/>
            <person name="Ricklin D."/>
            <person name="Geisbrecht B.V."/>
            <person name="Kavraki L.E."/>
            <person name="Lambris J.D."/>
        </authorList>
    </citation>
    <scope>X-RAY CRYSTALLOGRAPHY (2.10 ANGSTROMS) OF 101-164 IN COMPLEX WITH HOST C3</scope>
    <scope>MUTAGENESIS OF ARG-131 AND ASN-138</scope>
</reference>
<proteinExistence type="evidence at protein level"/>
<sequence length="165" mass="18765">MKNKLIAKSLLTLAAIGITTTTIASTADASEGYGPREKKPVSINHNIVEYNDGTFKYQSRPKFNSTPKYIKFKHDYNILEFNDGTFEYGARPQFNKPAAKTDATIKKEQKLIQAQNLVREFEKTHTVSAHRKAQKAVNLVSFEYKVKKMVLQERIDNVLKQGLVK</sequence>
<keyword id="KW-0002">3D-structure</keyword>
<keyword id="KW-0903">Direct protein sequencing</keyword>
<keyword id="KW-0964">Secreted</keyword>
<keyword id="KW-0732">Signal</keyword>
<keyword id="KW-0843">Virulence</keyword>
<comment type="function">
    <text evidence="2 4 5 6 7">Extracellular fibrinogen-binding protein that plays an important role in virulence (PubMed:7934883, PubMed:8945578). By interacting with the alpha chain of fibrinogen and its derivative fibrin, enhances a non-functional interaction between fibrinogen and platelets and is responsible for repression of fibrinogen-dependent platelet aggregation (PubMed:11418620). In addition, assembles a fibrinogen protective shield around the bacteria which results in impaired phagocytic clearance by the host. Mechanistically, interacts with host complement C3b deposited on the surface of the bacterium via its C-terminal and then recruits fibrinogen via its N-terminal (PubMed:24348255, PubMed:27112346).</text>
</comment>
<comment type="subunit">
    <text evidence="2 3 4">Interacts with host fibrinogen alpha chain/FGA (PubMed:11418620). Interacts with host complement protein C3 (PubMed:11418620, PubMed:18687868, PubMed:24348255).</text>
</comment>
<comment type="subcellular location">
    <subcellularLocation>
        <location>Secreted</location>
    </subcellularLocation>
</comment>
<feature type="signal peptide" evidence="1">
    <location>
        <begin position="1"/>
        <end position="29"/>
    </location>
</feature>
<feature type="chain" id="PRO_0000324754" description="Fibrinogen-binding protein">
    <location>
        <begin position="30"/>
        <end position="165"/>
    </location>
</feature>
<feature type="mutagenesis site" description="Loss of host C3d binding stability." evidence="3">
    <original>R</original>
    <variation>A</variation>
    <location>
        <position position="131"/>
    </location>
</feature>
<feature type="mutagenesis site" description="Loss of host C3d binding stability." evidence="3">
    <original>N</original>
    <variation>A</variation>
    <location>
        <position position="138"/>
    </location>
</feature>
<feature type="sequence conflict" description="In Ref. 1; CAA50893." evidence="8" ref="1">
    <original>K</original>
    <variation>A</variation>
    <location>
        <position position="4"/>
    </location>
</feature>
<feature type="helix" evidence="9">
    <location>
        <begin position="102"/>
        <end position="124"/>
    </location>
</feature>
<feature type="helix" evidence="9">
    <location>
        <begin position="127"/>
        <end position="138"/>
    </location>
</feature>
<feature type="helix" evidence="9">
    <location>
        <begin position="142"/>
        <end position="144"/>
    </location>
</feature>
<feature type="helix" evidence="9">
    <location>
        <begin position="145"/>
        <end position="161"/>
    </location>
</feature>
<evidence type="ECO:0000255" key="1"/>
<evidence type="ECO:0000269" key="2">
    <source>
    </source>
</evidence>
<evidence type="ECO:0000269" key="3">
    <source>
    </source>
</evidence>
<evidence type="ECO:0000269" key="4">
    <source>
    </source>
</evidence>
<evidence type="ECO:0000269" key="5">
    <source>
    </source>
</evidence>
<evidence type="ECO:0000269" key="6">
    <source>
    </source>
</evidence>
<evidence type="ECO:0000269" key="7">
    <source>
    </source>
</evidence>
<evidence type="ECO:0000305" key="8"/>
<evidence type="ECO:0007829" key="9">
    <source>
        <dbReference type="PDB" id="3D5R"/>
    </source>
</evidence>
<organism>
    <name type="scientific">Staphylococcus aureus (strain Newman)</name>
    <dbReference type="NCBI Taxonomy" id="426430"/>
    <lineage>
        <taxon>Bacteria</taxon>
        <taxon>Bacillati</taxon>
        <taxon>Bacillota</taxon>
        <taxon>Bacilli</taxon>
        <taxon>Bacillales</taxon>
        <taxon>Staphylococcaceae</taxon>
        <taxon>Staphylococcus</taxon>
    </lineage>
</organism>
<gene>
    <name type="primary">fib</name>
    <name type="synonym">efb</name>
    <name type="ordered locus">NWMN_1069</name>
</gene>
<protein>
    <recommendedName>
        <fullName>Fibrinogen-binding protein</fullName>
    </recommendedName>
</protein>